<protein>
    <recommendedName>
        <fullName evidence="1">UPF0201 protein YN1551_1676</fullName>
    </recommendedName>
</protein>
<accession>C3NHZ8</accession>
<reference key="1">
    <citation type="journal article" date="2009" name="Proc. Natl. Acad. Sci. U.S.A.">
        <title>Biogeography of the Sulfolobus islandicus pan-genome.</title>
        <authorList>
            <person name="Reno M.L."/>
            <person name="Held N.L."/>
            <person name="Fields C.J."/>
            <person name="Burke P.V."/>
            <person name="Whitaker R.J."/>
        </authorList>
    </citation>
    <scope>NUCLEOTIDE SEQUENCE [LARGE SCALE GENOMIC DNA]</scope>
    <source>
        <strain>Y.N.15.51 / Yellowstone #2</strain>
    </source>
</reference>
<name>Y1676_SACI1</name>
<gene>
    <name type="ordered locus">YN1551_1676</name>
</gene>
<proteinExistence type="inferred from homology"/>
<dbReference type="EMBL" id="CP001404">
    <property type="protein sequence ID" value="ACP48758.1"/>
    <property type="molecule type" value="Genomic_DNA"/>
</dbReference>
<dbReference type="RefSeq" id="WP_012713614.1">
    <property type="nucleotide sequence ID" value="NC_012623.1"/>
</dbReference>
<dbReference type="SMR" id="C3NHZ8"/>
<dbReference type="KEGG" id="sin:YN1551_1676"/>
<dbReference type="HOGENOM" id="CLU_134829_1_0_2"/>
<dbReference type="Proteomes" id="UP000006818">
    <property type="component" value="Chromosome"/>
</dbReference>
<dbReference type="Gene3D" id="3.30.1440.10">
    <property type="match status" value="1"/>
</dbReference>
<dbReference type="HAMAP" id="MF_01112">
    <property type="entry name" value="UPF0201"/>
    <property type="match status" value="1"/>
</dbReference>
<dbReference type="InterPro" id="IPR002739">
    <property type="entry name" value="PAB1135-like"/>
</dbReference>
<dbReference type="InterPro" id="IPR022803">
    <property type="entry name" value="Ribosomal_uL5_dom_sf"/>
</dbReference>
<dbReference type="NCBIfam" id="NF001687">
    <property type="entry name" value="PRK00447.1"/>
    <property type="match status" value="1"/>
</dbReference>
<dbReference type="PANTHER" id="PTHR39652">
    <property type="entry name" value="UPF0201 PROTEIN TK1335"/>
    <property type="match status" value="1"/>
</dbReference>
<dbReference type="PANTHER" id="PTHR39652:SF1">
    <property type="entry name" value="UPF0201 PROTEIN TK1335"/>
    <property type="match status" value="1"/>
</dbReference>
<dbReference type="Pfam" id="PF01877">
    <property type="entry name" value="RNA_binding"/>
    <property type="match status" value="1"/>
</dbReference>
<dbReference type="SUPFAM" id="SSF55282">
    <property type="entry name" value="RL5-like"/>
    <property type="match status" value="1"/>
</dbReference>
<evidence type="ECO:0000255" key="1">
    <source>
        <dbReference type="HAMAP-Rule" id="MF_01112"/>
    </source>
</evidence>
<organism>
    <name type="scientific">Saccharolobus islandicus (strain Y.N.15.51 / Yellowstone #2)</name>
    <name type="common">Sulfolobus islandicus</name>
    <dbReference type="NCBI Taxonomy" id="419942"/>
    <lineage>
        <taxon>Archaea</taxon>
        <taxon>Thermoproteota</taxon>
        <taxon>Thermoprotei</taxon>
        <taxon>Sulfolobales</taxon>
        <taxon>Sulfolobaceae</taxon>
        <taxon>Saccharolobus</taxon>
    </lineage>
</organism>
<comment type="similarity">
    <text evidence="1">Belongs to the UPF0201 family.</text>
</comment>
<feature type="chain" id="PRO_1000213587" description="UPF0201 protein YN1551_1676">
    <location>
        <begin position="1"/>
        <end position="145"/>
    </location>
</feature>
<sequence length="145" mass="16421">MVKVMVVAEVRPSEDVNKVLSAISNFFDFEKTNTRKEGIIDILVLEARTLKSLLKFHRVLRNERILDSARKYLMKGIEGNTIAFMIHKQAAAVGVLSFVDSDKESPLGAIKFYIEYQNPKEVVDWLAPRTAHGVPLWDNPIPPDV</sequence>